<sequence>MSNVDRYDVHRDGIEKDRKRSRSRKPHQNGQSQSTMDNRPPWNNDTYIEGYDDVDEHGKFRKRGGGMPKTIDRQQEELTKNWTESLREQHHQPQKQ</sequence>
<accession>Q93364</accession>
<accession>P90775</accession>
<dbReference type="EMBL" id="BX284601">
    <property type="protein sequence ID" value="CAB02843.2"/>
    <property type="molecule type" value="Genomic_DNA"/>
</dbReference>
<dbReference type="PIR" id="T19896">
    <property type="entry name" value="T19896"/>
</dbReference>
<dbReference type="RefSeq" id="NP_001361847.1">
    <property type="nucleotide sequence ID" value="NM_001375109.1"/>
</dbReference>
<dbReference type="RefSeq" id="NP_492532.1">
    <property type="nucleotide sequence ID" value="NM_060131.1"/>
</dbReference>
<dbReference type="FunCoup" id="Q93364">
    <property type="interactions" value="226"/>
</dbReference>
<dbReference type="PaxDb" id="6239-C41G7.7"/>
<dbReference type="EnsemblMetazoa" id="C41G7.7.1">
    <property type="protein sequence ID" value="C41G7.7.1"/>
    <property type="gene ID" value="WBGene00008064"/>
</dbReference>
<dbReference type="GeneID" id="183392"/>
<dbReference type="UCSC" id="C41G7.7">
    <property type="organism name" value="c. elegans"/>
</dbReference>
<dbReference type="AGR" id="WB:WBGene00008064"/>
<dbReference type="WormBase" id="C41G7.7">
    <property type="protein sequence ID" value="CE53736"/>
    <property type="gene ID" value="WBGene00008064"/>
</dbReference>
<dbReference type="eggNOG" id="ENOG502TJ5V">
    <property type="taxonomic scope" value="Eukaryota"/>
</dbReference>
<dbReference type="HOGENOM" id="CLU_1688309_0_0_1"/>
<dbReference type="InParanoid" id="Q93364"/>
<dbReference type="OrthoDB" id="5832480at2759"/>
<dbReference type="PRO" id="PR:Q93364"/>
<dbReference type="Proteomes" id="UP000001940">
    <property type="component" value="Chromosome I"/>
</dbReference>
<dbReference type="Bgee" id="WBGene00008064">
    <property type="expression patterns" value="Expressed in pharyngeal muscle cell (C elegans) and 3 other cell types or tissues"/>
</dbReference>
<protein>
    <recommendedName>
        <fullName>Uncharacterized protein C41G7.7</fullName>
    </recommendedName>
</protein>
<feature type="chain" id="PRO_0000065235" description="Uncharacterized protein C41G7.7">
    <location>
        <begin position="1"/>
        <end position="96"/>
    </location>
</feature>
<feature type="region of interest" description="Disordered" evidence="1">
    <location>
        <begin position="1"/>
        <end position="96"/>
    </location>
</feature>
<feature type="compositionally biased region" description="Basic and acidic residues" evidence="1">
    <location>
        <begin position="1"/>
        <end position="18"/>
    </location>
</feature>
<feature type="compositionally biased region" description="Polar residues" evidence="1">
    <location>
        <begin position="28"/>
        <end position="46"/>
    </location>
</feature>
<feature type="compositionally biased region" description="Basic and acidic residues" evidence="1">
    <location>
        <begin position="70"/>
        <end position="96"/>
    </location>
</feature>
<evidence type="ECO:0000256" key="1">
    <source>
        <dbReference type="SAM" id="MobiDB-lite"/>
    </source>
</evidence>
<evidence type="ECO:0000312" key="2">
    <source>
        <dbReference type="WormBase" id="C41G7.7"/>
    </source>
</evidence>
<proteinExistence type="predicted"/>
<gene>
    <name evidence="2" type="ORF">C41G7.7</name>
</gene>
<reference key="1">
    <citation type="journal article" date="1998" name="Science">
        <title>Genome sequence of the nematode C. elegans: a platform for investigating biology.</title>
        <authorList>
            <consortium name="The C. elegans sequencing consortium"/>
        </authorList>
    </citation>
    <scope>NUCLEOTIDE SEQUENCE [LARGE SCALE GENOMIC DNA]</scope>
    <source>
        <strain>Bristol N2</strain>
    </source>
</reference>
<organism>
    <name type="scientific">Caenorhabditis elegans</name>
    <dbReference type="NCBI Taxonomy" id="6239"/>
    <lineage>
        <taxon>Eukaryota</taxon>
        <taxon>Metazoa</taxon>
        <taxon>Ecdysozoa</taxon>
        <taxon>Nematoda</taxon>
        <taxon>Chromadorea</taxon>
        <taxon>Rhabditida</taxon>
        <taxon>Rhabditina</taxon>
        <taxon>Rhabditomorpha</taxon>
        <taxon>Rhabditoidea</taxon>
        <taxon>Rhabditidae</taxon>
        <taxon>Peloderinae</taxon>
        <taxon>Caenorhabditis</taxon>
    </lineage>
</organism>
<keyword id="KW-1185">Reference proteome</keyword>
<name>YE3O_CAEEL</name>